<accession>C5C4Y6</accession>
<gene>
    <name evidence="1" type="primary">lipA</name>
    <name type="ordered locus">Bcav_1858</name>
</gene>
<feature type="chain" id="PRO_1000204143" description="Lipoyl synthase">
    <location>
        <begin position="1"/>
        <end position="332"/>
    </location>
</feature>
<feature type="domain" description="Radical SAM core" evidence="2">
    <location>
        <begin position="67"/>
        <end position="281"/>
    </location>
</feature>
<feature type="binding site" evidence="1">
    <location>
        <position position="55"/>
    </location>
    <ligand>
        <name>[4Fe-4S] cluster</name>
        <dbReference type="ChEBI" id="CHEBI:49883"/>
        <label>1</label>
    </ligand>
</feature>
<feature type="binding site" evidence="1">
    <location>
        <position position="60"/>
    </location>
    <ligand>
        <name>[4Fe-4S] cluster</name>
        <dbReference type="ChEBI" id="CHEBI:49883"/>
        <label>1</label>
    </ligand>
</feature>
<feature type="binding site" evidence="1">
    <location>
        <position position="66"/>
    </location>
    <ligand>
        <name>[4Fe-4S] cluster</name>
        <dbReference type="ChEBI" id="CHEBI:49883"/>
        <label>1</label>
    </ligand>
</feature>
<feature type="binding site" evidence="1">
    <location>
        <position position="81"/>
    </location>
    <ligand>
        <name>[4Fe-4S] cluster</name>
        <dbReference type="ChEBI" id="CHEBI:49883"/>
        <label>2</label>
        <note>4Fe-4S-S-AdoMet</note>
    </ligand>
</feature>
<feature type="binding site" evidence="1">
    <location>
        <position position="85"/>
    </location>
    <ligand>
        <name>[4Fe-4S] cluster</name>
        <dbReference type="ChEBI" id="CHEBI:49883"/>
        <label>2</label>
        <note>4Fe-4S-S-AdoMet</note>
    </ligand>
</feature>
<feature type="binding site" evidence="1">
    <location>
        <position position="88"/>
    </location>
    <ligand>
        <name>[4Fe-4S] cluster</name>
        <dbReference type="ChEBI" id="CHEBI:49883"/>
        <label>2</label>
        <note>4Fe-4S-S-AdoMet</note>
    </ligand>
</feature>
<feature type="binding site" evidence="1">
    <location>
        <position position="292"/>
    </location>
    <ligand>
        <name>[4Fe-4S] cluster</name>
        <dbReference type="ChEBI" id="CHEBI:49883"/>
        <label>1</label>
    </ligand>
</feature>
<proteinExistence type="inferred from homology"/>
<dbReference type="EC" id="2.8.1.8" evidence="1"/>
<dbReference type="EMBL" id="CP001618">
    <property type="protein sequence ID" value="ACQ80114.1"/>
    <property type="molecule type" value="Genomic_DNA"/>
</dbReference>
<dbReference type="RefSeq" id="WP_015882354.1">
    <property type="nucleotide sequence ID" value="NC_012669.1"/>
</dbReference>
<dbReference type="SMR" id="C5C4Y6"/>
<dbReference type="STRING" id="471853.Bcav_1858"/>
<dbReference type="KEGG" id="bcv:Bcav_1858"/>
<dbReference type="eggNOG" id="COG0320">
    <property type="taxonomic scope" value="Bacteria"/>
</dbReference>
<dbReference type="HOGENOM" id="CLU_033144_2_1_11"/>
<dbReference type="OrthoDB" id="9787898at2"/>
<dbReference type="UniPathway" id="UPA00538">
    <property type="reaction ID" value="UER00593"/>
</dbReference>
<dbReference type="Proteomes" id="UP000007962">
    <property type="component" value="Chromosome"/>
</dbReference>
<dbReference type="GO" id="GO:0005737">
    <property type="term" value="C:cytoplasm"/>
    <property type="evidence" value="ECO:0007669"/>
    <property type="project" value="UniProtKB-SubCell"/>
</dbReference>
<dbReference type="GO" id="GO:0051539">
    <property type="term" value="F:4 iron, 4 sulfur cluster binding"/>
    <property type="evidence" value="ECO:0007669"/>
    <property type="project" value="UniProtKB-UniRule"/>
</dbReference>
<dbReference type="GO" id="GO:0016992">
    <property type="term" value="F:lipoate synthase activity"/>
    <property type="evidence" value="ECO:0007669"/>
    <property type="project" value="UniProtKB-UniRule"/>
</dbReference>
<dbReference type="GO" id="GO:0046872">
    <property type="term" value="F:metal ion binding"/>
    <property type="evidence" value="ECO:0007669"/>
    <property type="project" value="UniProtKB-KW"/>
</dbReference>
<dbReference type="CDD" id="cd01335">
    <property type="entry name" value="Radical_SAM"/>
    <property type="match status" value="1"/>
</dbReference>
<dbReference type="FunFam" id="3.20.20.70:FF:000116">
    <property type="entry name" value="Lipoyl synthase"/>
    <property type="match status" value="1"/>
</dbReference>
<dbReference type="Gene3D" id="3.20.20.70">
    <property type="entry name" value="Aldolase class I"/>
    <property type="match status" value="1"/>
</dbReference>
<dbReference type="HAMAP" id="MF_00206">
    <property type="entry name" value="Lipoyl_synth"/>
    <property type="match status" value="1"/>
</dbReference>
<dbReference type="InterPro" id="IPR013785">
    <property type="entry name" value="Aldolase_TIM"/>
</dbReference>
<dbReference type="InterPro" id="IPR006638">
    <property type="entry name" value="Elp3/MiaA/NifB-like_rSAM"/>
</dbReference>
<dbReference type="InterPro" id="IPR031691">
    <property type="entry name" value="LIAS_N"/>
</dbReference>
<dbReference type="InterPro" id="IPR003698">
    <property type="entry name" value="Lipoyl_synth"/>
</dbReference>
<dbReference type="InterPro" id="IPR007197">
    <property type="entry name" value="rSAM"/>
</dbReference>
<dbReference type="NCBIfam" id="TIGR00510">
    <property type="entry name" value="lipA"/>
    <property type="match status" value="1"/>
</dbReference>
<dbReference type="NCBIfam" id="NF004019">
    <property type="entry name" value="PRK05481.1"/>
    <property type="match status" value="1"/>
</dbReference>
<dbReference type="NCBIfam" id="NF009544">
    <property type="entry name" value="PRK12928.1"/>
    <property type="match status" value="1"/>
</dbReference>
<dbReference type="PANTHER" id="PTHR10949">
    <property type="entry name" value="LIPOYL SYNTHASE"/>
    <property type="match status" value="1"/>
</dbReference>
<dbReference type="PANTHER" id="PTHR10949:SF0">
    <property type="entry name" value="LIPOYL SYNTHASE, MITOCHONDRIAL"/>
    <property type="match status" value="1"/>
</dbReference>
<dbReference type="Pfam" id="PF16881">
    <property type="entry name" value="LIAS_N"/>
    <property type="match status" value="1"/>
</dbReference>
<dbReference type="Pfam" id="PF04055">
    <property type="entry name" value="Radical_SAM"/>
    <property type="match status" value="1"/>
</dbReference>
<dbReference type="PIRSF" id="PIRSF005963">
    <property type="entry name" value="Lipoyl_synth"/>
    <property type="match status" value="1"/>
</dbReference>
<dbReference type="SFLD" id="SFLDF00271">
    <property type="entry name" value="lipoyl_synthase"/>
    <property type="match status" value="1"/>
</dbReference>
<dbReference type="SFLD" id="SFLDG01058">
    <property type="entry name" value="lipoyl_synthase_like"/>
    <property type="match status" value="1"/>
</dbReference>
<dbReference type="SMART" id="SM00729">
    <property type="entry name" value="Elp3"/>
    <property type="match status" value="1"/>
</dbReference>
<dbReference type="SUPFAM" id="SSF102114">
    <property type="entry name" value="Radical SAM enzymes"/>
    <property type="match status" value="1"/>
</dbReference>
<dbReference type="PROSITE" id="PS51918">
    <property type="entry name" value="RADICAL_SAM"/>
    <property type="match status" value="1"/>
</dbReference>
<keyword id="KW-0004">4Fe-4S</keyword>
<keyword id="KW-0963">Cytoplasm</keyword>
<keyword id="KW-0408">Iron</keyword>
<keyword id="KW-0411">Iron-sulfur</keyword>
<keyword id="KW-0479">Metal-binding</keyword>
<keyword id="KW-1185">Reference proteome</keyword>
<keyword id="KW-0949">S-adenosyl-L-methionine</keyword>
<keyword id="KW-0808">Transferase</keyword>
<reference key="1">
    <citation type="journal article" date="2009" name="Stand. Genomic Sci.">
        <title>Complete genome sequence of Beutenbergia cavernae type strain (HKI 0122).</title>
        <authorList>
            <person name="Land M."/>
            <person name="Pukall R."/>
            <person name="Abt B."/>
            <person name="Goker M."/>
            <person name="Rohde M."/>
            <person name="Glavina Del Rio T."/>
            <person name="Tice H."/>
            <person name="Copeland A."/>
            <person name="Cheng J.F."/>
            <person name="Lucas S."/>
            <person name="Chen F."/>
            <person name="Nolan M."/>
            <person name="Bruce D."/>
            <person name="Goodwin L."/>
            <person name="Pitluck S."/>
            <person name="Ivanova N."/>
            <person name="Mavromatis K."/>
            <person name="Ovchinnikova G."/>
            <person name="Pati A."/>
            <person name="Chen A."/>
            <person name="Palaniappan K."/>
            <person name="Hauser L."/>
            <person name="Chang Y.J."/>
            <person name="Jefferies C.C."/>
            <person name="Saunders E."/>
            <person name="Brettin T."/>
            <person name="Detter J.C."/>
            <person name="Han C."/>
            <person name="Chain P."/>
            <person name="Bristow J."/>
            <person name="Eisen J.A."/>
            <person name="Markowitz V."/>
            <person name="Hugenholtz P."/>
            <person name="Kyrpides N.C."/>
            <person name="Klenk H.P."/>
            <person name="Lapidus A."/>
        </authorList>
    </citation>
    <scope>NUCLEOTIDE SEQUENCE [LARGE SCALE GENOMIC DNA]</scope>
    <source>
        <strain>ATCC BAA-8 / DSM 12333 / CCUG 43141 / JCM 11478 / NBRC 16432 / NCIMB 13614 / HKI 0122</strain>
    </source>
</reference>
<evidence type="ECO:0000255" key="1">
    <source>
        <dbReference type="HAMAP-Rule" id="MF_00206"/>
    </source>
</evidence>
<evidence type="ECO:0000255" key="2">
    <source>
        <dbReference type="PROSITE-ProRule" id="PRU01266"/>
    </source>
</evidence>
<sequence>MTIAPEGRRLLRVEARNAAVPIEKKPPWIKTRATMGPEYTELRSLVRREGLHTVCEEAGCPNIFECWEDREATFLIGGDQCTRRCDFCQIDTGKPADFDADEPRRVAESVQAMGLRYSTVTGVARDDLADGGAWLYAETVRQIHALNPGTGVELLIPDFNAEPDQLAEVFSSRPEVLAHNLETVPRVFKRIRPGFRYARSLSVLTAARDAGLVTKSNLILGMGETTAEAVEALADLHAAGCDLVTITQYLRPSPRHHPVERWVKPEEFVELSDEAERIGFLGVMAGPLVRSSYRAGRLWGQAMARRGLEVPPALAHLTEPTTSRQEAASLLR</sequence>
<comment type="function">
    <text evidence="1">Catalyzes the radical-mediated insertion of two sulfur atoms into the C-6 and C-8 positions of the octanoyl moiety bound to the lipoyl domains of lipoate-dependent enzymes, thereby converting the octanoylated domains into lipoylated derivatives.</text>
</comment>
<comment type="catalytic activity">
    <reaction evidence="1">
        <text>[[Fe-S] cluster scaffold protein carrying a second [4Fe-4S](2+) cluster] + N(6)-octanoyl-L-lysyl-[protein] + 2 oxidized [2Fe-2S]-[ferredoxin] + 2 S-adenosyl-L-methionine + 4 H(+) = [[Fe-S] cluster scaffold protein] + N(6)-[(R)-dihydrolipoyl]-L-lysyl-[protein] + 4 Fe(3+) + 2 hydrogen sulfide + 2 5'-deoxyadenosine + 2 L-methionine + 2 reduced [2Fe-2S]-[ferredoxin]</text>
        <dbReference type="Rhea" id="RHEA:16585"/>
        <dbReference type="Rhea" id="RHEA-COMP:9928"/>
        <dbReference type="Rhea" id="RHEA-COMP:10000"/>
        <dbReference type="Rhea" id="RHEA-COMP:10001"/>
        <dbReference type="Rhea" id="RHEA-COMP:10475"/>
        <dbReference type="Rhea" id="RHEA-COMP:14568"/>
        <dbReference type="Rhea" id="RHEA-COMP:14569"/>
        <dbReference type="ChEBI" id="CHEBI:15378"/>
        <dbReference type="ChEBI" id="CHEBI:17319"/>
        <dbReference type="ChEBI" id="CHEBI:29034"/>
        <dbReference type="ChEBI" id="CHEBI:29919"/>
        <dbReference type="ChEBI" id="CHEBI:33722"/>
        <dbReference type="ChEBI" id="CHEBI:33737"/>
        <dbReference type="ChEBI" id="CHEBI:33738"/>
        <dbReference type="ChEBI" id="CHEBI:57844"/>
        <dbReference type="ChEBI" id="CHEBI:59789"/>
        <dbReference type="ChEBI" id="CHEBI:78809"/>
        <dbReference type="ChEBI" id="CHEBI:83100"/>
        <dbReference type="EC" id="2.8.1.8"/>
    </reaction>
</comment>
<comment type="cofactor">
    <cofactor evidence="1">
        <name>[4Fe-4S] cluster</name>
        <dbReference type="ChEBI" id="CHEBI:49883"/>
    </cofactor>
    <text evidence="1">Binds 2 [4Fe-4S] clusters per subunit. One cluster is coordinated with 3 cysteines and an exchangeable S-adenosyl-L-methionine.</text>
</comment>
<comment type="pathway">
    <text evidence="1">Protein modification; protein lipoylation via endogenous pathway; protein N(6)-(lipoyl)lysine from octanoyl-[acyl-carrier-protein]: step 2/2.</text>
</comment>
<comment type="subcellular location">
    <subcellularLocation>
        <location evidence="1">Cytoplasm</location>
    </subcellularLocation>
</comment>
<comment type="similarity">
    <text evidence="1">Belongs to the radical SAM superfamily. Lipoyl synthase family.</text>
</comment>
<organism>
    <name type="scientific">Beutenbergia cavernae (strain ATCC BAA-8 / DSM 12333 / CCUG 43141 / JCM 11478 / NBRC 16432 / NCIMB 13614 / HKI 0122)</name>
    <dbReference type="NCBI Taxonomy" id="471853"/>
    <lineage>
        <taxon>Bacteria</taxon>
        <taxon>Bacillati</taxon>
        <taxon>Actinomycetota</taxon>
        <taxon>Actinomycetes</taxon>
        <taxon>Micrococcales</taxon>
        <taxon>Beutenbergiaceae</taxon>
        <taxon>Beutenbergia</taxon>
    </lineage>
</organism>
<protein>
    <recommendedName>
        <fullName evidence="1">Lipoyl synthase</fullName>
        <ecNumber evidence="1">2.8.1.8</ecNumber>
    </recommendedName>
    <alternativeName>
        <fullName evidence="1">Lip-syn</fullName>
        <shortName evidence="1">LS</shortName>
    </alternativeName>
    <alternativeName>
        <fullName evidence="1">Lipoate synthase</fullName>
    </alternativeName>
    <alternativeName>
        <fullName evidence="1">Lipoic acid synthase</fullName>
    </alternativeName>
    <alternativeName>
        <fullName evidence="1">Sulfur insertion protein LipA</fullName>
    </alternativeName>
</protein>
<name>LIPA_BEUC1</name>